<dbReference type="EC" id="5.4.3.8" evidence="1"/>
<dbReference type="EMBL" id="CP000493">
    <property type="protein sequence ID" value="ABM80688.1"/>
    <property type="molecule type" value="Genomic_DNA"/>
</dbReference>
<dbReference type="RefSeq" id="WP_011822006.1">
    <property type="nucleotide sequence ID" value="NC_008818.1"/>
</dbReference>
<dbReference type="SMR" id="A2BL27"/>
<dbReference type="STRING" id="415426.Hbut_0837"/>
<dbReference type="EnsemblBacteria" id="ABM80688">
    <property type="protein sequence ID" value="ABM80688"/>
    <property type="gene ID" value="Hbut_0837"/>
</dbReference>
<dbReference type="GeneID" id="4782262"/>
<dbReference type="KEGG" id="hbu:Hbut_0837"/>
<dbReference type="eggNOG" id="arCOG00918">
    <property type="taxonomic scope" value="Archaea"/>
</dbReference>
<dbReference type="HOGENOM" id="CLU_016922_1_5_2"/>
<dbReference type="OrthoDB" id="6524at2157"/>
<dbReference type="UniPathway" id="UPA00251">
    <property type="reaction ID" value="UER00317"/>
</dbReference>
<dbReference type="Proteomes" id="UP000002593">
    <property type="component" value="Chromosome"/>
</dbReference>
<dbReference type="GO" id="GO:0005737">
    <property type="term" value="C:cytoplasm"/>
    <property type="evidence" value="ECO:0007669"/>
    <property type="project" value="UniProtKB-SubCell"/>
</dbReference>
<dbReference type="GO" id="GO:0042286">
    <property type="term" value="F:glutamate-1-semialdehyde 2,1-aminomutase activity"/>
    <property type="evidence" value="ECO:0007669"/>
    <property type="project" value="UniProtKB-UniRule"/>
</dbReference>
<dbReference type="GO" id="GO:0030170">
    <property type="term" value="F:pyridoxal phosphate binding"/>
    <property type="evidence" value="ECO:0007669"/>
    <property type="project" value="InterPro"/>
</dbReference>
<dbReference type="GO" id="GO:0008483">
    <property type="term" value="F:transaminase activity"/>
    <property type="evidence" value="ECO:0007669"/>
    <property type="project" value="InterPro"/>
</dbReference>
<dbReference type="GO" id="GO:0006782">
    <property type="term" value="P:protoporphyrinogen IX biosynthetic process"/>
    <property type="evidence" value="ECO:0007669"/>
    <property type="project" value="UniProtKB-UniRule"/>
</dbReference>
<dbReference type="CDD" id="cd00610">
    <property type="entry name" value="OAT_like"/>
    <property type="match status" value="1"/>
</dbReference>
<dbReference type="FunFam" id="3.40.640.10:FF:000021">
    <property type="entry name" value="Glutamate-1-semialdehyde 2,1-aminomutase"/>
    <property type="match status" value="1"/>
</dbReference>
<dbReference type="Gene3D" id="3.90.1150.10">
    <property type="entry name" value="Aspartate Aminotransferase, domain 1"/>
    <property type="match status" value="1"/>
</dbReference>
<dbReference type="Gene3D" id="3.40.640.10">
    <property type="entry name" value="Type I PLP-dependent aspartate aminotransferase-like (Major domain)"/>
    <property type="match status" value="1"/>
</dbReference>
<dbReference type="HAMAP" id="MF_00375">
    <property type="entry name" value="HemL_aminotrans_3"/>
    <property type="match status" value="1"/>
</dbReference>
<dbReference type="InterPro" id="IPR004639">
    <property type="entry name" value="4pyrrol_synth_GluAld_NH2Trfase"/>
</dbReference>
<dbReference type="InterPro" id="IPR005814">
    <property type="entry name" value="Aminotrans_3"/>
</dbReference>
<dbReference type="InterPro" id="IPR049704">
    <property type="entry name" value="Aminotrans_3_PPA_site"/>
</dbReference>
<dbReference type="InterPro" id="IPR015424">
    <property type="entry name" value="PyrdxlP-dep_Trfase"/>
</dbReference>
<dbReference type="InterPro" id="IPR015421">
    <property type="entry name" value="PyrdxlP-dep_Trfase_major"/>
</dbReference>
<dbReference type="InterPro" id="IPR015422">
    <property type="entry name" value="PyrdxlP-dep_Trfase_small"/>
</dbReference>
<dbReference type="NCBIfam" id="TIGR00713">
    <property type="entry name" value="hemL"/>
    <property type="match status" value="1"/>
</dbReference>
<dbReference type="NCBIfam" id="NF000818">
    <property type="entry name" value="PRK00062.1"/>
    <property type="match status" value="1"/>
</dbReference>
<dbReference type="PANTHER" id="PTHR43713">
    <property type="entry name" value="GLUTAMATE-1-SEMIALDEHYDE 2,1-AMINOMUTASE"/>
    <property type="match status" value="1"/>
</dbReference>
<dbReference type="PANTHER" id="PTHR43713:SF3">
    <property type="entry name" value="GLUTAMATE-1-SEMIALDEHYDE 2,1-AMINOMUTASE 1, CHLOROPLASTIC-RELATED"/>
    <property type="match status" value="1"/>
</dbReference>
<dbReference type="Pfam" id="PF00202">
    <property type="entry name" value="Aminotran_3"/>
    <property type="match status" value="1"/>
</dbReference>
<dbReference type="SUPFAM" id="SSF53383">
    <property type="entry name" value="PLP-dependent transferases"/>
    <property type="match status" value="1"/>
</dbReference>
<dbReference type="PROSITE" id="PS00600">
    <property type="entry name" value="AA_TRANSFER_CLASS_3"/>
    <property type="match status" value="1"/>
</dbReference>
<name>GSA_HYPBU</name>
<organism>
    <name type="scientific">Hyperthermus butylicus (strain DSM 5456 / JCM 9403 / PLM1-5)</name>
    <dbReference type="NCBI Taxonomy" id="415426"/>
    <lineage>
        <taxon>Archaea</taxon>
        <taxon>Thermoproteota</taxon>
        <taxon>Thermoprotei</taxon>
        <taxon>Desulfurococcales</taxon>
        <taxon>Pyrodictiaceae</taxon>
        <taxon>Hyperthermus</taxon>
    </lineage>
</organism>
<protein>
    <recommendedName>
        <fullName evidence="1">Glutamate-1-semialdehyde 2,1-aminomutase</fullName>
        <shortName evidence="1">GSA</shortName>
        <ecNumber evidence="1">5.4.3.8</ecNumber>
    </recommendedName>
    <alternativeName>
        <fullName evidence="1">Glutamate-1-semialdehyde aminotransferase</fullName>
        <shortName evidence="1">GSA-AT</shortName>
    </alternativeName>
</protein>
<keyword id="KW-0963">Cytoplasm</keyword>
<keyword id="KW-0413">Isomerase</keyword>
<keyword id="KW-0627">Porphyrin biosynthesis</keyword>
<keyword id="KW-0663">Pyridoxal phosphate</keyword>
<keyword id="KW-1185">Reference proteome</keyword>
<feature type="chain" id="PRO_1000059991" description="Glutamate-1-semialdehyde 2,1-aminomutase">
    <location>
        <begin position="1"/>
        <end position="426"/>
    </location>
</feature>
<feature type="modified residue" description="N6-(pyridoxal phosphate)lysine" evidence="1">
    <location>
        <position position="265"/>
    </location>
</feature>
<accession>A2BL27</accession>
<reference key="1">
    <citation type="journal article" date="2007" name="Archaea">
        <title>The genome of Hyperthermus butylicus: a sulfur-reducing, peptide fermenting, neutrophilic Crenarchaeote growing up to 108 degrees C.</title>
        <authorList>
            <person name="Bruegger K."/>
            <person name="Chen L."/>
            <person name="Stark M."/>
            <person name="Zibat A."/>
            <person name="Redder P."/>
            <person name="Ruepp A."/>
            <person name="Awayez M."/>
            <person name="She Q."/>
            <person name="Garrett R.A."/>
            <person name="Klenk H.-P."/>
        </authorList>
    </citation>
    <scope>NUCLEOTIDE SEQUENCE [LARGE SCALE GENOMIC DNA]</scope>
    <source>
        <strain>DSM 5456 / JCM 9403 / PLM1-5</strain>
    </source>
</reference>
<sequence>MPGEVSRSLYEKALTLFPGGVNSPVRAAVKPYPFYVERAEGPYIYTVDGEKLIDYVLAYGPLILGHKHPRVEEAVRRQLEKGWLYGAPYELEIRLAEKILKYYHPGGMVRFVNTGTEATMTAIRLARGVTGRKYIVKFNGCYHGAHDAVLVGAGSAAAEYGVPTSKGIPEEVAKLTLVAKYNDIESVEKIMSKHGDEVAAIIVEPVAGNAGVIPPKKGFLQELRRIASEHGALLIMDEVITGFRLALGGAQEYYRVKADITTLGKIVGGGFPIGVVVADRKIMEHLTPSGKVFNAGTFNAHPVTMAAGLATIEVLEEGTPYRVASEAGRALAEELESLVLSYGIDAAVNHVESMLQIFFVKGEVWSPEDAAKSDKKLYLKLHEELLKLGVFIAPSQMEAIFTSAAHTSDVVSETIEKLRKAFKRLR</sequence>
<evidence type="ECO:0000255" key="1">
    <source>
        <dbReference type="HAMAP-Rule" id="MF_00375"/>
    </source>
</evidence>
<gene>
    <name evidence="1" type="primary">hemL</name>
    <name type="ordered locus">Hbut_0837</name>
</gene>
<proteinExistence type="inferred from homology"/>
<comment type="catalytic activity">
    <reaction evidence="1">
        <text>(S)-4-amino-5-oxopentanoate = 5-aminolevulinate</text>
        <dbReference type="Rhea" id="RHEA:14265"/>
        <dbReference type="ChEBI" id="CHEBI:57501"/>
        <dbReference type="ChEBI" id="CHEBI:356416"/>
        <dbReference type="EC" id="5.4.3.8"/>
    </reaction>
</comment>
<comment type="cofactor">
    <cofactor evidence="1">
        <name>pyridoxal 5'-phosphate</name>
        <dbReference type="ChEBI" id="CHEBI:597326"/>
    </cofactor>
</comment>
<comment type="pathway">
    <text evidence="1">Porphyrin-containing compound metabolism; protoporphyrin-IX biosynthesis; 5-aminolevulinate from L-glutamyl-tRNA(Glu): step 2/2.</text>
</comment>
<comment type="subcellular location">
    <subcellularLocation>
        <location evidence="1">Cytoplasm</location>
    </subcellularLocation>
</comment>
<comment type="similarity">
    <text evidence="1">Belongs to the class-III pyridoxal-phosphate-dependent aminotransferase family. HemL subfamily.</text>
</comment>